<accession>P21749</accession>
<organism>
    <name type="scientific">Drosophila simulans</name>
    <name type="common">Fruit fly</name>
    <dbReference type="NCBI Taxonomy" id="7240"/>
    <lineage>
        <taxon>Eukaryota</taxon>
        <taxon>Metazoa</taxon>
        <taxon>Ecdysozoa</taxon>
        <taxon>Arthropoda</taxon>
        <taxon>Hexapoda</taxon>
        <taxon>Insecta</taxon>
        <taxon>Pterygota</taxon>
        <taxon>Neoptera</taxon>
        <taxon>Endopterygota</taxon>
        <taxon>Diptera</taxon>
        <taxon>Brachycera</taxon>
        <taxon>Muscomorpha</taxon>
        <taxon>Ephydroidea</taxon>
        <taxon>Drosophilidae</taxon>
        <taxon>Drosophila</taxon>
        <taxon>Sophophora</taxon>
    </lineage>
</organism>
<feature type="signal peptide" evidence="2">
    <location>
        <begin position="1"/>
        <end position="16"/>
    </location>
</feature>
<feature type="chain" id="PRO_0000022269" description="Protein spalt-accessory">
    <location>
        <begin position="17"/>
        <end position="139"/>
    </location>
</feature>
<feature type="region of interest" description="Disordered" evidence="3">
    <location>
        <begin position="60"/>
        <end position="139"/>
    </location>
</feature>
<feature type="compositionally biased region" description="Gly residues" evidence="3">
    <location>
        <begin position="60"/>
        <end position="75"/>
    </location>
</feature>
<feature type="compositionally biased region" description="Basic and acidic residues" evidence="3">
    <location>
        <begin position="109"/>
        <end position="121"/>
    </location>
</feature>
<feature type="compositionally biased region" description="Basic residues" evidence="3">
    <location>
        <begin position="122"/>
        <end position="139"/>
    </location>
</feature>
<gene>
    <name type="primary">sala</name>
    <name type="synonym">sal</name>
</gene>
<keyword id="KW-0217">Developmental protein</keyword>
<keyword id="KW-0964">Secreted</keyword>
<keyword id="KW-0732">Signal</keyword>
<protein>
    <recommendedName>
        <fullName>Protein spalt-accessory</fullName>
    </recommendedName>
</protein>
<reference key="1">
    <citation type="journal article" date="1989" name="Proc. Natl. Acad. Sci. U.S.A.">
        <title>The homeotic gene spalt (sal) evolved during Drosophila speciation.</title>
        <authorList>
            <person name="Reuter D."/>
            <person name="Schuh R."/>
            <person name="Jaeckle H."/>
        </authorList>
    </citation>
    <scope>NUCLEOTIDE SEQUENCE [GENOMIC DNA]</scope>
</reference>
<dbReference type="EMBL" id="M21227">
    <property type="protein sequence ID" value="AAA28877.1"/>
    <property type="molecule type" value="Genomic_DNA"/>
</dbReference>
<dbReference type="PIR" id="B33910">
    <property type="entry name" value="B33910"/>
</dbReference>
<dbReference type="ChiTaRS" id="sls">
    <property type="organism name" value="fly"/>
</dbReference>
<dbReference type="GO" id="GO:0005576">
    <property type="term" value="C:extracellular region"/>
    <property type="evidence" value="ECO:0007669"/>
    <property type="project" value="UniProtKB-SubCell"/>
</dbReference>
<name>SALA_DROSI</name>
<comment type="function">
    <text evidence="1">Likely to be involved in the establishment of the head.</text>
</comment>
<comment type="subcellular location">
    <subcellularLocation>
        <location evidence="1">Secreted</location>
    </subcellularLocation>
</comment>
<proteinExistence type="inferred from homology"/>
<sequence length="139" mass="14145">MKLLIALLALVTAAIAQNGFGQGGYGGQGGFGGFGGLGGQAGFGGQIGFNGQGGVGGQVGIGQGGVHPGQGGFAGQGSPNQYQPGYGNPVGSGHFHGGNPVESGHFHGNPHEYPEHHGEHHREHHEHHGHHEHHGHHRH</sequence>
<evidence type="ECO:0000250" key="1"/>
<evidence type="ECO:0000255" key="2"/>
<evidence type="ECO:0000256" key="3">
    <source>
        <dbReference type="SAM" id="MobiDB-lite"/>
    </source>
</evidence>